<keyword id="KW-0413">Isomerase</keyword>
<keyword id="KW-1185">Reference proteome</keyword>
<proteinExistence type="inferred from homology"/>
<reference key="1">
    <citation type="journal article" date="2009" name="BMC Genomics">
        <title>Evidence for niche adaptation in the genome of the bovine pathogen Streptococcus uberis.</title>
        <authorList>
            <person name="Ward P.N."/>
            <person name="Holden M.T.G."/>
            <person name="Leigh J.A."/>
            <person name="Lennard N."/>
            <person name="Bignell A."/>
            <person name="Barron A."/>
            <person name="Clark L."/>
            <person name="Quail M.A."/>
            <person name="Woodward J."/>
            <person name="Barrell B.G."/>
            <person name="Egan S.A."/>
            <person name="Field T.R."/>
            <person name="Maskell D."/>
            <person name="Kehoe M."/>
            <person name="Dowson C.G."/>
            <person name="Chanter N."/>
            <person name="Whatmore A.M."/>
            <person name="Bentley S.D."/>
            <person name="Parkhill J."/>
        </authorList>
    </citation>
    <scope>NUCLEOTIDE SEQUENCE [LARGE SCALE GENOMIC DNA]</scope>
    <source>
        <strain>ATCC BAA-854 / 0140J</strain>
    </source>
</reference>
<accession>B9DSL9</accession>
<sequence length="467" mass="53730">MTFNDKNFMLKNQAAKQLYTAVQDQPIFDYHCHLDPKEIFEDKVFENIVDLWLGGDHYKWRLMRANGISEEEITGSASQLDKFKAFARTLQRSYGNPVYHWSAMELKNVFGIEEVLTEENAEEIYNRLNTYLLENKVSPRKLIADSKVTFIGTTDHPLDTLEWHQKLAEDKSFETIVAPTFRPDEAFIEHHNFKGFLDKLSQATGKEMTEFKDFISAMEDRIAYFAENGCKASDISFTEIVFEAAEESELNELLAKVKDGYKPNALEVKQWQTAVFAELCQLYKKYGFVTQVHFGALRNNHSKLYQKLGADVGIDSLGDQTALTSNMNKLLDNLVQKDALPKMIWYNLNPSYNIAVANTLANFQANEEGVKSYLQFGAGWWFADTKLGMISQMNALAEQGMLANFVGMLTDSRSFLSYQRHDYFRRILCTYLGEWIEEGEVPEDYEALGHMAKDIAYHNAVNYFKHE</sequence>
<protein>
    <recommendedName>
        <fullName evidence="1">Uronate isomerase</fullName>
        <ecNumber evidence="1">5.3.1.12</ecNumber>
    </recommendedName>
    <alternativeName>
        <fullName evidence="1">Glucuronate isomerase</fullName>
    </alternativeName>
    <alternativeName>
        <fullName evidence="1">Uronic isomerase</fullName>
    </alternativeName>
</protein>
<feature type="chain" id="PRO_1000147694" description="Uronate isomerase">
    <location>
        <begin position="1"/>
        <end position="467"/>
    </location>
</feature>
<gene>
    <name evidence="1" type="primary">uxaC</name>
    <name type="ordered locus">SUB1203</name>
</gene>
<name>UXAC_STRU0</name>
<dbReference type="EC" id="5.3.1.12" evidence="1"/>
<dbReference type="EMBL" id="AM946015">
    <property type="protein sequence ID" value="CAR42641.1"/>
    <property type="molecule type" value="Genomic_DNA"/>
</dbReference>
<dbReference type="RefSeq" id="WP_012658683.1">
    <property type="nucleotide sequence ID" value="NC_012004.1"/>
</dbReference>
<dbReference type="SMR" id="B9DSL9"/>
<dbReference type="STRING" id="218495.SUB1203"/>
<dbReference type="KEGG" id="sub:SUB1203"/>
<dbReference type="eggNOG" id="COG1904">
    <property type="taxonomic scope" value="Bacteria"/>
</dbReference>
<dbReference type="HOGENOM" id="CLU_044465_1_0_9"/>
<dbReference type="OrthoDB" id="9766564at2"/>
<dbReference type="UniPathway" id="UPA00246"/>
<dbReference type="Proteomes" id="UP000000449">
    <property type="component" value="Chromosome"/>
</dbReference>
<dbReference type="GO" id="GO:0008880">
    <property type="term" value="F:glucuronate isomerase activity"/>
    <property type="evidence" value="ECO:0007669"/>
    <property type="project" value="UniProtKB-UniRule"/>
</dbReference>
<dbReference type="GO" id="GO:0019698">
    <property type="term" value="P:D-galacturonate catabolic process"/>
    <property type="evidence" value="ECO:0007669"/>
    <property type="project" value="TreeGrafter"/>
</dbReference>
<dbReference type="GO" id="GO:0042840">
    <property type="term" value="P:D-glucuronate catabolic process"/>
    <property type="evidence" value="ECO:0007669"/>
    <property type="project" value="TreeGrafter"/>
</dbReference>
<dbReference type="Gene3D" id="3.20.20.140">
    <property type="entry name" value="Metal-dependent hydrolases"/>
    <property type="match status" value="1"/>
</dbReference>
<dbReference type="Gene3D" id="1.10.2020.10">
    <property type="entry name" value="uronate isomerase, domain 2, chain A"/>
    <property type="match status" value="1"/>
</dbReference>
<dbReference type="HAMAP" id="MF_00675">
    <property type="entry name" value="UxaC"/>
    <property type="match status" value="1"/>
</dbReference>
<dbReference type="InterPro" id="IPR032466">
    <property type="entry name" value="Metal_Hydrolase"/>
</dbReference>
<dbReference type="InterPro" id="IPR003766">
    <property type="entry name" value="Uronate_isomerase"/>
</dbReference>
<dbReference type="NCBIfam" id="NF002794">
    <property type="entry name" value="PRK02925.1"/>
    <property type="match status" value="1"/>
</dbReference>
<dbReference type="PANTHER" id="PTHR30068">
    <property type="entry name" value="URONATE ISOMERASE"/>
    <property type="match status" value="1"/>
</dbReference>
<dbReference type="PANTHER" id="PTHR30068:SF4">
    <property type="entry name" value="URONATE ISOMERASE"/>
    <property type="match status" value="1"/>
</dbReference>
<dbReference type="Pfam" id="PF02614">
    <property type="entry name" value="UxaC"/>
    <property type="match status" value="1"/>
</dbReference>
<dbReference type="SUPFAM" id="SSF51556">
    <property type="entry name" value="Metallo-dependent hydrolases"/>
    <property type="match status" value="1"/>
</dbReference>
<evidence type="ECO:0000255" key="1">
    <source>
        <dbReference type="HAMAP-Rule" id="MF_00675"/>
    </source>
</evidence>
<organism>
    <name type="scientific">Streptococcus uberis (strain ATCC BAA-854 / 0140J)</name>
    <dbReference type="NCBI Taxonomy" id="218495"/>
    <lineage>
        <taxon>Bacteria</taxon>
        <taxon>Bacillati</taxon>
        <taxon>Bacillota</taxon>
        <taxon>Bacilli</taxon>
        <taxon>Lactobacillales</taxon>
        <taxon>Streptococcaceae</taxon>
        <taxon>Streptococcus</taxon>
    </lineage>
</organism>
<comment type="catalytic activity">
    <reaction evidence="1">
        <text>D-glucuronate = D-fructuronate</text>
        <dbReference type="Rhea" id="RHEA:13049"/>
        <dbReference type="ChEBI" id="CHEBI:58720"/>
        <dbReference type="ChEBI" id="CHEBI:59863"/>
        <dbReference type="EC" id="5.3.1.12"/>
    </reaction>
</comment>
<comment type="catalytic activity">
    <reaction evidence="1">
        <text>aldehydo-D-galacturonate = keto-D-tagaturonate</text>
        <dbReference type="Rhea" id="RHEA:27702"/>
        <dbReference type="ChEBI" id="CHEBI:12952"/>
        <dbReference type="ChEBI" id="CHEBI:17886"/>
        <dbReference type="EC" id="5.3.1.12"/>
    </reaction>
</comment>
<comment type="pathway">
    <text evidence="1">Carbohydrate metabolism; pentose and glucuronate interconversion.</text>
</comment>
<comment type="similarity">
    <text evidence="1">Belongs to the metallo-dependent hydrolases superfamily. Uronate isomerase family.</text>
</comment>